<organism>
    <name type="scientific">Rhodopseudomonas palustris (strain BisA53)</name>
    <dbReference type="NCBI Taxonomy" id="316055"/>
    <lineage>
        <taxon>Bacteria</taxon>
        <taxon>Pseudomonadati</taxon>
        <taxon>Pseudomonadota</taxon>
        <taxon>Alphaproteobacteria</taxon>
        <taxon>Hyphomicrobiales</taxon>
        <taxon>Nitrobacteraceae</taxon>
        <taxon>Rhodopseudomonas</taxon>
    </lineage>
</organism>
<reference key="1">
    <citation type="submission" date="2006-09" db="EMBL/GenBank/DDBJ databases">
        <title>Complete sequence of Rhodopseudomonas palustris BisA53.</title>
        <authorList>
            <consortium name="US DOE Joint Genome Institute"/>
            <person name="Copeland A."/>
            <person name="Lucas S."/>
            <person name="Lapidus A."/>
            <person name="Barry K."/>
            <person name="Detter J.C."/>
            <person name="Glavina del Rio T."/>
            <person name="Hammon N."/>
            <person name="Israni S."/>
            <person name="Dalin E."/>
            <person name="Tice H."/>
            <person name="Pitluck S."/>
            <person name="Chain P."/>
            <person name="Malfatti S."/>
            <person name="Shin M."/>
            <person name="Vergez L."/>
            <person name="Schmutz J."/>
            <person name="Larimer F."/>
            <person name="Land M."/>
            <person name="Hauser L."/>
            <person name="Pelletier D.A."/>
            <person name="Kyrpides N."/>
            <person name="Kim E."/>
            <person name="Harwood C.S."/>
            <person name="Oda Y."/>
            <person name="Richardson P."/>
        </authorList>
    </citation>
    <scope>NUCLEOTIDE SEQUENCE [LARGE SCALE GENOMIC DNA]</scope>
    <source>
        <strain>BisA53</strain>
    </source>
</reference>
<dbReference type="EC" id="2.7.7.6" evidence="1"/>
<dbReference type="EMBL" id="CP000463">
    <property type="protein sequence ID" value="ABJ07526.1"/>
    <property type="molecule type" value="Genomic_DNA"/>
</dbReference>
<dbReference type="SMR" id="Q07KK8"/>
<dbReference type="STRING" id="316055.RPE_3596"/>
<dbReference type="KEGG" id="rpe:RPE_3596"/>
<dbReference type="eggNOG" id="COG0086">
    <property type="taxonomic scope" value="Bacteria"/>
</dbReference>
<dbReference type="HOGENOM" id="CLU_000524_3_1_5"/>
<dbReference type="OrthoDB" id="9815296at2"/>
<dbReference type="GO" id="GO:0000428">
    <property type="term" value="C:DNA-directed RNA polymerase complex"/>
    <property type="evidence" value="ECO:0007669"/>
    <property type="project" value="UniProtKB-KW"/>
</dbReference>
<dbReference type="GO" id="GO:0003677">
    <property type="term" value="F:DNA binding"/>
    <property type="evidence" value="ECO:0007669"/>
    <property type="project" value="UniProtKB-UniRule"/>
</dbReference>
<dbReference type="GO" id="GO:0003899">
    <property type="term" value="F:DNA-directed RNA polymerase activity"/>
    <property type="evidence" value="ECO:0007669"/>
    <property type="project" value="UniProtKB-UniRule"/>
</dbReference>
<dbReference type="GO" id="GO:0000287">
    <property type="term" value="F:magnesium ion binding"/>
    <property type="evidence" value="ECO:0007669"/>
    <property type="project" value="UniProtKB-UniRule"/>
</dbReference>
<dbReference type="GO" id="GO:0008270">
    <property type="term" value="F:zinc ion binding"/>
    <property type="evidence" value="ECO:0007669"/>
    <property type="project" value="UniProtKB-UniRule"/>
</dbReference>
<dbReference type="GO" id="GO:0006351">
    <property type="term" value="P:DNA-templated transcription"/>
    <property type="evidence" value="ECO:0007669"/>
    <property type="project" value="UniProtKB-UniRule"/>
</dbReference>
<dbReference type="CDD" id="cd02655">
    <property type="entry name" value="RNAP_beta'_C"/>
    <property type="match status" value="1"/>
</dbReference>
<dbReference type="CDD" id="cd01609">
    <property type="entry name" value="RNAP_beta'_N"/>
    <property type="match status" value="1"/>
</dbReference>
<dbReference type="Gene3D" id="1.10.132.30">
    <property type="match status" value="1"/>
</dbReference>
<dbReference type="Gene3D" id="1.10.150.390">
    <property type="match status" value="1"/>
</dbReference>
<dbReference type="Gene3D" id="1.10.1790.20">
    <property type="match status" value="1"/>
</dbReference>
<dbReference type="Gene3D" id="1.10.40.90">
    <property type="match status" value="1"/>
</dbReference>
<dbReference type="Gene3D" id="2.40.40.20">
    <property type="match status" value="1"/>
</dbReference>
<dbReference type="Gene3D" id="2.40.50.100">
    <property type="match status" value="3"/>
</dbReference>
<dbReference type="Gene3D" id="4.10.860.120">
    <property type="entry name" value="RNA polymerase II, clamp domain"/>
    <property type="match status" value="1"/>
</dbReference>
<dbReference type="Gene3D" id="1.10.274.100">
    <property type="entry name" value="RNA polymerase Rpb1, domain 3"/>
    <property type="match status" value="2"/>
</dbReference>
<dbReference type="HAMAP" id="MF_01322">
    <property type="entry name" value="RNApol_bact_RpoC"/>
    <property type="match status" value="1"/>
</dbReference>
<dbReference type="InterPro" id="IPR045867">
    <property type="entry name" value="DNA-dir_RpoC_beta_prime"/>
</dbReference>
<dbReference type="InterPro" id="IPR012754">
    <property type="entry name" value="DNA-dir_RpoC_beta_prime_bact"/>
</dbReference>
<dbReference type="InterPro" id="IPR000722">
    <property type="entry name" value="RNA_pol_asu"/>
</dbReference>
<dbReference type="InterPro" id="IPR006592">
    <property type="entry name" value="RNA_pol_N"/>
</dbReference>
<dbReference type="InterPro" id="IPR007080">
    <property type="entry name" value="RNA_pol_Rpb1_1"/>
</dbReference>
<dbReference type="InterPro" id="IPR007066">
    <property type="entry name" value="RNA_pol_Rpb1_3"/>
</dbReference>
<dbReference type="InterPro" id="IPR042102">
    <property type="entry name" value="RNA_pol_Rpb1_3_sf"/>
</dbReference>
<dbReference type="InterPro" id="IPR007083">
    <property type="entry name" value="RNA_pol_Rpb1_4"/>
</dbReference>
<dbReference type="InterPro" id="IPR007081">
    <property type="entry name" value="RNA_pol_Rpb1_5"/>
</dbReference>
<dbReference type="InterPro" id="IPR044893">
    <property type="entry name" value="RNA_pol_Rpb1_clamp_domain"/>
</dbReference>
<dbReference type="InterPro" id="IPR038120">
    <property type="entry name" value="Rpb1_funnel_sf"/>
</dbReference>
<dbReference type="NCBIfam" id="TIGR02386">
    <property type="entry name" value="rpoC_TIGR"/>
    <property type="match status" value="1"/>
</dbReference>
<dbReference type="PANTHER" id="PTHR19376">
    <property type="entry name" value="DNA-DIRECTED RNA POLYMERASE"/>
    <property type="match status" value="1"/>
</dbReference>
<dbReference type="PANTHER" id="PTHR19376:SF54">
    <property type="entry name" value="DNA-DIRECTED RNA POLYMERASE SUBUNIT BETA"/>
    <property type="match status" value="1"/>
</dbReference>
<dbReference type="Pfam" id="PF04997">
    <property type="entry name" value="RNA_pol_Rpb1_1"/>
    <property type="match status" value="1"/>
</dbReference>
<dbReference type="Pfam" id="PF00623">
    <property type="entry name" value="RNA_pol_Rpb1_2"/>
    <property type="match status" value="2"/>
</dbReference>
<dbReference type="Pfam" id="PF04983">
    <property type="entry name" value="RNA_pol_Rpb1_3"/>
    <property type="match status" value="1"/>
</dbReference>
<dbReference type="Pfam" id="PF05000">
    <property type="entry name" value="RNA_pol_Rpb1_4"/>
    <property type="match status" value="1"/>
</dbReference>
<dbReference type="Pfam" id="PF04998">
    <property type="entry name" value="RNA_pol_Rpb1_5"/>
    <property type="match status" value="1"/>
</dbReference>
<dbReference type="SMART" id="SM00663">
    <property type="entry name" value="RPOLA_N"/>
    <property type="match status" value="1"/>
</dbReference>
<dbReference type="SUPFAM" id="SSF64484">
    <property type="entry name" value="beta and beta-prime subunits of DNA dependent RNA-polymerase"/>
    <property type="match status" value="1"/>
</dbReference>
<accession>Q07KK8</accession>
<evidence type="ECO:0000255" key="1">
    <source>
        <dbReference type="HAMAP-Rule" id="MF_01322"/>
    </source>
</evidence>
<name>RPOC_RHOP5</name>
<sequence length="1400" mass="156092">MNQEIMNLFNPTTPAQVFDQIRISIASPEKILSWSYGEIKKPETINYRTFKPERDGLFCARIFGPIKDYECLCGKYKRMKYKGIICEKCSVEVTLSRVRRERMGHIELAAPVAHIWFLKSLPSRIGLLLDMTLKDLERILYFEYYVVLEPGLTALKDRQLLSEEEYLRAQDEYGQDSFTAMIGAEAIRELLKGLELEKLETHLRAEMQETDSDIKHKKLAKRLKIVEAFRFSGNKPEWMIMTVVPVIPPDLRPLVPLDGGRFATSDLNDLYRRVINRNNRLKRLMELRAPDIIIRNEKRMLQEAVDALFDNGRRGRVITGANKRPLKSLADMLKGKQGRFRQNLLGKRVDYSGRSVIVVGPELRLHQCGLPKKMALELFKPFIYSRLDAKGLSTTVKQAKKLVEKERPEVWDILDEVIREHPVLLNRAPTLHRLGIQAFEPVLIEGKAIQLHPLVCSAFNADFDGDQMAVHVPLSLEAQLEARVLMMSTNNILHPANGLPIIVPSQDIVLGLYYLSILREGLPGEGKLYGEMAEIEHALHSKVIHLHTKIKYRCEGMDEEGKPVTKWYETTAGRAMLGQVLPKHPRVPFDTINKLMTKKEISGVIDQVYRHCGQKETVIFCDRIMALGFYNAFKAGISFGKDDMVVPSSKWKIVEDTRTLAKEFEQQYNDGLITHGEKYNKVVDAWSKCTKKISEDMMTEISAVKKNPKGGEAQINSIFMMSNSGARGSQDQMRQLAGMRGLMAKPSGEIIETPIISNFKEGLSVLEYFNSTHGARKGLADTALKTANSGYLTRRLVDVAQDCIITADDCGTKLGIKMRAIIDAGTVVASLASRILGRTAGEDLREPSTNRIVVKRGTLMEESHVDALQQAGIQEVKIRSALTCELVNGICGKCYGRDLARGTPVNHGEAVGVIAAQSIGEPGTQLTMRTFHIGGAAQINEQSFIESNFDGKIVIKNKAIAKNSENLSVAMVRNMVVAVVDADGTERATHRIQYGARMRVDEGDMVKRGQRIAEWDPYTRPVLTEVEGIIGFEDLVEGQSISETLDESTGIAKRVVIDWRSTRGGADLRPAIVIKGKDGKVQKLARGGDARYMLSVDAILSVDVGSVVKSGDILARISTESAKTRDITGGLPRVAELFEARKPKDAAIIAEIAGTIRFGRDYKNKRRISIEPMDKEEETREYLIPKGKHIHLQDGDIVEKGDFIVEGNPAPHDILAIKGIEELAAYLVNEIQEVYRLQGVLINDKHIEVIVRQMLQKVEITDQGETDMISGEQIDKIEFDQINAKAKEEGKKIATGTPVLLGITKASLQTRSFFSAASFQETTRVLTEAAVNGKVDPLEGLKENVIVGRLIPAGTGASMSKIREVAIKRDKMILDEREKQAAAIVPTAPEAEPLALPTPE</sequence>
<comment type="function">
    <text evidence="1">DNA-dependent RNA polymerase catalyzes the transcription of DNA into RNA using the four ribonucleoside triphosphates as substrates.</text>
</comment>
<comment type="catalytic activity">
    <reaction evidence="1">
        <text>RNA(n) + a ribonucleoside 5'-triphosphate = RNA(n+1) + diphosphate</text>
        <dbReference type="Rhea" id="RHEA:21248"/>
        <dbReference type="Rhea" id="RHEA-COMP:14527"/>
        <dbReference type="Rhea" id="RHEA-COMP:17342"/>
        <dbReference type="ChEBI" id="CHEBI:33019"/>
        <dbReference type="ChEBI" id="CHEBI:61557"/>
        <dbReference type="ChEBI" id="CHEBI:140395"/>
        <dbReference type="EC" id="2.7.7.6"/>
    </reaction>
</comment>
<comment type="cofactor">
    <cofactor evidence="1">
        <name>Mg(2+)</name>
        <dbReference type="ChEBI" id="CHEBI:18420"/>
    </cofactor>
    <text evidence="1">Binds 1 Mg(2+) ion per subunit.</text>
</comment>
<comment type="cofactor">
    <cofactor evidence="1">
        <name>Zn(2+)</name>
        <dbReference type="ChEBI" id="CHEBI:29105"/>
    </cofactor>
    <text evidence="1">Binds 2 Zn(2+) ions per subunit.</text>
</comment>
<comment type="subunit">
    <text evidence="1">The RNAP catalytic core consists of 2 alpha, 1 beta, 1 beta' and 1 omega subunit. When a sigma factor is associated with the core the holoenzyme is formed, which can initiate transcription.</text>
</comment>
<comment type="similarity">
    <text evidence="1">Belongs to the RNA polymerase beta' chain family.</text>
</comment>
<protein>
    <recommendedName>
        <fullName evidence="1">DNA-directed RNA polymerase subunit beta'</fullName>
        <shortName evidence="1">RNAP subunit beta'</shortName>
        <ecNumber evidence="1">2.7.7.6</ecNumber>
    </recommendedName>
    <alternativeName>
        <fullName evidence="1">RNA polymerase subunit beta'</fullName>
    </alternativeName>
    <alternativeName>
        <fullName evidence="1">Transcriptase subunit beta'</fullName>
    </alternativeName>
</protein>
<gene>
    <name evidence="1" type="primary">rpoC</name>
    <name type="ordered locus">RPE_3596</name>
</gene>
<proteinExistence type="inferred from homology"/>
<keyword id="KW-0240">DNA-directed RNA polymerase</keyword>
<keyword id="KW-0460">Magnesium</keyword>
<keyword id="KW-0479">Metal-binding</keyword>
<keyword id="KW-0548">Nucleotidyltransferase</keyword>
<keyword id="KW-0804">Transcription</keyword>
<keyword id="KW-0808">Transferase</keyword>
<keyword id="KW-0862">Zinc</keyword>
<feature type="chain" id="PRO_1000086408" description="DNA-directed RNA polymerase subunit beta'">
    <location>
        <begin position="1"/>
        <end position="1400"/>
    </location>
</feature>
<feature type="binding site" evidence="1">
    <location>
        <position position="71"/>
    </location>
    <ligand>
        <name>Zn(2+)</name>
        <dbReference type="ChEBI" id="CHEBI:29105"/>
        <label>1</label>
    </ligand>
</feature>
<feature type="binding site" evidence="1">
    <location>
        <position position="73"/>
    </location>
    <ligand>
        <name>Zn(2+)</name>
        <dbReference type="ChEBI" id="CHEBI:29105"/>
        <label>1</label>
    </ligand>
</feature>
<feature type="binding site" evidence="1">
    <location>
        <position position="86"/>
    </location>
    <ligand>
        <name>Zn(2+)</name>
        <dbReference type="ChEBI" id="CHEBI:29105"/>
        <label>1</label>
    </ligand>
</feature>
<feature type="binding site" evidence="1">
    <location>
        <position position="89"/>
    </location>
    <ligand>
        <name>Zn(2+)</name>
        <dbReference type="ChEBI" id="CHEBI:29105"/>
        <label>1</label>
    </ligand>
</feature>
<feature type="binding site" evidence="1">
    <location>
        <position position="462"/>
    </location>
    <ligand>
        <name>Mg(2+)</name>
        <dbReference type="ChEBI" id="CHEBI:18420"/>
    </ligand>
</feature>
<feature type="binding site" evidence="1">
    <location>
        <position position="464"/>
    </location>
    <ligand>
        <name>Mg(2+)</name>
        <dbReference type="ChEBI" id="CHEBI:18420"/>
    </ligand>
</feature>
<feature type="binding site" evidence="1">
    <location>
        <position position="466"/>
    </location>
    <ligand>
        <name>Mg(2+)</name>
        <dbReference type="ChEBI" id="CHEBI:18420"/>
    </ligand>
</feature>
<feature type="binding site" evidence="1">
    <location>
        <position position="810"/>
    </location>
    <ligand>
        <name>Zn(2+)</name>
        <dbReference type="ChEBI" id="CHEBI:29105"/>
        <label>2</label>
    </ligand>
</feature>
<feature type="binding site" evidence="1">
    <location>
        <position position="884"/>
    </location>
    <ligand>
        <name>Zn(2+)</name>
        <dbReference type="ChEBI" id="CHEBI:29105"/>
        <label>2</label>
    </ligand>
</feature>
<feature type="binding site" evidence="1">
    <location>
        <position position="891"/>
    </location>
    <ligand>
        <name>Zn(2+)</name>
        <dbReference type="ChEBI" id="CHEBI:29105"/>
        <label>2</label>
    </ligand>
</feature>
<feature type="binding site" evidence="1">
    <location>
        <position position="894"/>
    </location>
    <ligand>
        <name>Zn(2+)</name>
        <dbReference type="ChEBI" id="CHEBI:29105"/>
        <label>2</label>
    </ligand>
</feature>